<keyword id="KW-0143">Chaperone</keyword>
<keyword id="KW-0963">Cytoplasm</keyword>
<dbReference type="EMBL" id="CR628337">
    <property type="protein sequence ID" value="CAH15687.1"/>
    <property type="molecule type" value="Genomic_DNA"/>
</dbReference>
<dbReference type="SMR" id="Q5WWK6"/>
<dbReference type="KEGG" id="lpf:lpl1447"/>
<dbReference type="LegioList" id="lpl1447"/>
<dbReference type="HOGENOM" id="CLU_103054_2_2_6"/>
<dbReference type="Proteomes" id="UP000002517">
    <property type="component" value="Chromosome"/>
</dbReference>
<dbReference type="GO" id="GO:0005737">
    <property type="term" value="C:cytoplasm"/>
    <property type="evidence" value="ECO:0007669"/>
    <property type="project" value="UniProtKB-SubCell"/>
</dbReference>
<dbReference type="GO" id="GO:0006105">
    <property type="term" value="P:succinate metabolic process"/>
    <property type="evidence" value="ECO:0007669"/>
    <property type="project" value="TreeGrafter"/>
</dbReference>
<dbReference type="Gene3D" id="1.10.150.250">
    <property type="entry name" value="Flavinator of succinate dehydrogenase"/>
    <property type="match status" value="1"/>
</dbReference>
<dbReference type="InterPro" id="IPR005631">
    <property type="entry name" value="SDH"/>
</dbReference>
<dbReference type="InterPro" id="IPR036714">
    <property type="entry name" value="SDH_sf"/>
</dbReference>
<dbReference type="InterPro" id="IPR050531">
    <property type="entry name" value="SdhE_FAD_assembly_factor"/>
</dbReference>
<dbReference type="PANTHER" id="PTHR39585">
    <property type="entry name" value="FAD ASSEMBLY FACTOR SDHE"/>
    <property type="match status" value="1"/>
</dbReference>
<dbReference type="PANTHER" id="PTHR39585:SF1">
    <property type="entry name" value="FAD ASSEMBLY FACTOR SDHE"/>
    <property type="match status" value="1"/>
</dbReference>
<dbReference type="Pfam" id="PF03937">
    <property type="entry name" value="Sdh5"/>
    <property type="match status" value="1"/>
</dbReference>
<dbReference type="SUPFAM" id="SSF109910">
    <property type="entry name" value="YgfY-like"/>
    <property type="match status" value="1"/>
</dbReference>
<name>SDHE_LEGPL</name>
<protein>
    <recommendedName>
        <fullName>FAD assembly factor SdhE</fullName>
    </recommendedName>
</protein>
<proteinExistence type="inferred from homology"/>
<sequence length="79" mass="9488">MDNREKSRLLWKCRRGMLELDLVLQKFIANEIDRLTENQLKAFDNLLTHNDPNLYAWLMGHEEPEKELLEIVSFIRNCD</sequence>
<comment type="function">
    <text evidence="1">An FAD assembly protein, which accelerates covalent attachment of the cofactor into other proteins. Plays an essential role in the assembly of succinate dehydrogenase (SDH, respiratory complex II), an enzyme complex that is a component of both the tricarboxylic acid cycle and the electron transport chain, and which couples the oxidation of succinate to fumarate with the reduction of ubiquinone (coenzyme Q) to ubiquinol. Required for flavinylation (covalent attachment of FAD) of the flavoprotein subunit SdhA of SDH and other flavinylated proteins as well.</text>
</comment>
<comment type="subcellular location">
    <subcellularLocation>
        <location evidence="1">Cytoplasm</location>
    </subcellularLocation>
</comment>
<comment type="similarity">
    <text evidence="2">Belongs to the SdhE FAD assembly factor family.</text>
</comment>
<accession>Q5WWK6</accession>
<feature type="chain" id="PRO_0000214404" description="FAD assembly factor SdhE">
    <location>
        <begin position="1"/>
        <end position="79"/>
    </location>
</feature>
<evidence type="ECO:0000250" key="1">
    <source>
        <dbReference type="UniProtKB" id="G4V4G2"/>
    </source>
</evidence>
<evidence type="ECO:0000305" key="2"/>
<reference key="1">
    <citation type="journal article" date="2004" name="Nat. Genet.">
        <title>Evidence in the Legionella pneumophila genome for exploitation of host cell functions and high genome plasticity.</title>
        <authorList>
            <person name="Cazalet C."/>
            <person name="Rusniok C."/>
            <person name="Brueggemann H."/>
            <person name="Zidane N."/>
            <person name="Magnier A."/>
            <person name="Ma L."/>
            <person name="Tichit M."/>
            <person name="Jarraud S."/>
            <person name="Bouchier C."/>
            <person name="Vandenesch F."/>
            <person name="Kunst F."/>
            <person name="Etienne J."/>
            <person name="Glaser P."/>
            <person name="Buchrieser C."/>
        </authorList>
    </citation>
    <scope>NUCLEOTIDE SEQUENCE [LARGE SCALE GENOMIC DNA]</scope>
    <source>
        <strain>Lens</strain>
    </source>
</reference>
<organism>
    <name type="scientific">Legionella pneumophila (strain Lens)</name>
    <dbReference type="NCBI Taxonomy" id="297245"/>
    <lineage>
        <taxon>Bacteria</taxon>
        <taxon>Pseudomonadati</taxon>
        <taxon>Pseudomonadota</taxon>
        <taxon>Gammaproteobacteria</taxon>
        <taxon>Legionellales</taxon>
        <taxon>Legionellaceae</taxon>
        <taxon>Legionella</taxon>
    </lineage>
</organism>
<gene>
    <name type="primary">sdhE</name>
    <name type="ordered locus">lpl1447</name>
</gene>